<comment type="function">
    <text evidence="1">May act as a negative regulator of collagen matrix deposition.</text>
</comment>
<comment type="subcellular location">
    <subcellularLocation>
        <location evidence="1">Secreted</location>
        <location evidence="1">Extracellular space</location>
        <location evidence="1">Extracellular matrix</location>
    </subcellularLocation>
</comment>
<comment type="alternative products">
    <event type="alternative splicing"/>
    <isoform>
        <id>Q96CG8-1</id>
        <name>1</name>
        <sequence type="displayed"/>
    </isoform>
    <isoform>
        <id>Q96CG8-2</id>
        <name>2</name>
        <sequence type="described" ref="VSP_013622 VSP_013623"/>
    </isoform>
    <isoform>
        <id>Q96CG8-3</id>
        <name>3</name>
        <sequence type="described" ref="VSP_013622"/>
    </isoform>
</comment>
<comment type="tissue specificity">
    <text evidence="4">Isoform 1 is expressed in calcified atherosclerotic plaque and chondrocyte-like cells.</text>
</comment>
<comment type="PTM">
    <text evidence="1">N-glycosylated.</text>
</comment>
<comment type="disease" evidence="5">
    <disease id="DI-03276">
        <name>Barrett esophagus</name>
        <acronym>BE</acronym>
        <description>A condition characterized by a metaplastic change in which normal esophageal squamous epithelium is replaced by a columnar and intestinal-type epithelium. Patients with Barrett esophagus have an increased risk of esophageal adenocarcinoma. The main cause of Barrett esophagus is gastroesophageal reflux. The retrograde movement of acid and bile salts from the stomach into the esophagus causes prolonged injury to the esophageal epithelium and induces chronic esophagitis, which in turn is believed to trigger the pathologic changes.</description>
        <dbReference type="MIM" id="614266"/>
    </disease>
    <text>Disease susceptibility is associated with variants affecting the gene represented in this entry.</text>
</comment>
<comment type="online information" name="Atlas of Genetics and Cytogenetics in Oncology and Haematology">
    <link uri="https://atlasgeneticsoncology.org/gene/40193/CTHRC1"/>
</comment>
<evidence type="ECO:0000250" key="1"/>
<evidence type="ECO:0000255" key="2"/>
<evidence type="ECO:0000256" key="3">
    <source>
        <dbReference type="SAM" id="MobiDB-lite"/>
    </source>
</evidence>
<evidence type="ECO:0000269" key="4">
    <source>
    </source>
</evidence>
<evidence type="ECO:0000269" key="5">
    <source>
    </source>
</evidence>
<evidence type="ECO:0000303" key="6">
    <source ref="2"/>
</evidence>
<evidence type="ECO:0000305" key="7"/>
<gene>
    <name type="primary">CTHRC1</name>
    <name type="ORF">UNQ762/PRO1550</name>
</gene>
<organism>
    <name type="scientific">Homo sapiens</name>
    <name type="common">Human</name>
    <dbReference type="NCBI Taxonomy" id="9606"/>
    <lineage>
        <taxon>Eukaryota</taxon>
        <taxon>Metazoa</taxon>
        <taxon>Chordata</taxon>
        <taxon>Craniata</taxon>
        <taxon>Vertebrata</taxon>
        <taxon>Euteleostomi</taxon>
        <taxon>Mammalia</taxon>
        <taxon>Eutheria</taxon>
        <taxon>Euarchontoglires</taxon>
        <taxon>Primates</taxon>
        <taxon>Haplorrhini</taxon>
        <taxon>Catarrhini</taxon>
        <taxon>Hominidae</taxon>
        <taxon>Homo</taxon>
    </lineage>
</organism>
<sequence>MRPQGPAASPQRLRGLLLLLLLQLPAPSSASEIPKGKQKAQLRQREVVDLYNGMCLQGPAGVPGRDGSPGANGIPGTPGIPGRDGFKGEKGECLRESFEESWTPNYKQCSWSSLNYGIDLGKIAECTFTKMRSNSALRVLFSGSLRLKCRNACCQRWYFTFNGAECSGPLPIEAIIYLDQGSPEMNSTINIHRTSSVEGLCEGIGAGLVDVAIWVGTCSDYPKGDASTGWNSVSRIIIEELPK</sequence>
<protein>
    <recommendedName>
        <fullName>Collagen triple helix repeat-containing protein 1</fullName>
    </recommendedName>
</protein>
<feature type="signal peptide">
    <location>
        <begin position="1"/>
        <end position="30"/>
    </location>
</feature>
<feature type="chain" id="PRO_0000021038" description="Collagen triple helix repeat-containing protein 1">
    <location>
        <begin position="31"/>
        <end position="243"/>
    </location>
</feature>
<feature type="domain" description="Collagen-like">
    <location>
        <begin position="57"/>
        <end position="90"/>
    </location>
</feature>
<feature type="region of interest" description="Disordered" evidence="3">
    <location>
        <begin position="62"/>
        <end position="85"/>
    </location>
</feature>
<feature type="glycosylation site" description="N-linked (GlcNAc...) asparagine" evidence="2">
    <location>
        <position position="186"/>
    </location>
</feature>
<feature type="splice variant" id="VSP_013622" description="In isoform 2 and isoform 3." evidence="6">
    <original>MRPQGPAASPQRLRGLLLLLLLQLPAPSSASEIPKGKQKAQLRQREVVDL</original>
    <variation>MWPPGRSITVKLREKTVSRKLEMNGPSAFQGLICGK</variation>
    <location>
        <begin position="1"/>
        <end position="50"/>
    </location>
</feature>
<feature type="splice variant" id="VSP_013623" description="In isoform 2." evidence="6">
    <original>K</original>
    <variation>IYML</variation>
    <location>
        <position position="243"/>
    </location>
</feature>
<feature type="sequence variant" id="VAR_066589" description="Found in patients with Barrett esophagus; dbSNP:rs387907029." evidence="5">
    <original>Q</original>
    <variation>P</variation>
    <location>
        <position position="44"/>
    </location>
</feature>
<feature type="sequence conflict" description="In Ref. 3; AAQ89273." evidence="7" ref="3">
    <original>G</original>
    <variation>V</variation>
    <location>
        <position position="73"/>
    </location>
</feature>
<name>CTHR1_HUMAN</name>
<accession>Q96CG8</accession>
<accession>G3V141</accession>
<accession>Q6UW91</accession>
<accession>Q8IX63</accession>
<proteinExistence type="evidence at protein level"/>
<keyword id="KW-0025">Alternative splicing</keyword>
<keyword id="KW-0176">Collagen</keyword>
<keyword id="KW-0903">Direct protein sequencing</keyword>
<keyword id="KW-0272">Extracellular matrix</keyword>
<keyword id="KW-0325">Glycoprotein</keyword>
<keyword id="KW-1267">Proteomics identification</keyword>
<keyword id="KW-1185">Reference proteome</keyword>
<keyword id="KW-0964">Secreted</keyword>
<keyword id="KW-0732">Signal</keyword>
<reference key="1">
    <citation type="journal article" date="2005" name="Circ. Res.">
        <title>Collagen triple helix repeat containing 1, a novel secreted protein in injured and diseased arteries, inhibits collagen expression and promotes cell migration.</title>
        <authorList>
            <person name="Pyagay P."/>
            <person name="Heroult M."/>
            <person name="Wang Q."/>
            <person name="Lehnert W."/>
            <person name="Belden J."/>
            <person name="Liaw L."/>
            <person name="Friesel R.E."/>
            <person name="Lindner V."/>
        </authorList>
    </citation>
    <scope>NUCLEOTIDE SEQUENCE [MRNA] (ISOFORM 1)</scope>
    <scope>TISSUE SPECIFICITY</scope>
    <source>
        <tissue>Aorta</tissue>
    </source>
</reference>
<reference key="2">
    <citation type="submission" date="2001-06" db="EMBL/GenBank/DDBJ databases">
        <title>Novel polypeptide found in human cornea cDNA library.</title>
        <authorList>
            <person name="Sanuki N."/>
            <person name="Fujiki K."/>
            <person name="Kanai A."/>
            <person name="Tanaka Y."/>
            <person name="Iwata T."/>
        </authorList>
    </citation>
    <scope>NUCLEOTIDE SEQUENCE [MRNA] (ISOFORM 2)</scope>
</reference>
<reference key="3">
    <citation type="journal article" date="2003" name="Genome Res.">
        <title>The secreted protein discovery initiative (SPDI), a large-scale effort to identify novel human secreted and transmembrane proteins: a bioinformatics assessment.</title>
        <authorList>
            <person name="Clark H.F."/>
            <person name="Gurney A.L."/>
            <person name="Abaya E."/>
            <person name="Baker K."/>
            <person name="Baldwin D.T."/>
            <person name="Brush J."/>
            <person name="Chen J."/>
            <person name="Chow B."/>
            <person name="Chui C."/>
            <person name="Crowley C."/>
            <person name="Currell B."/>
            <person name="Deuel B."/>
            <person name="Dowd P."/>
            <person name="Eaton D."/>
            <person name="Foster J.S."/>
            <person name="Grimaldi C."/>
            <person name="Gu Q."/>
            <person name="Hass P.E."/>
            <person name="Heldens S."/>
            <person name="Huang A."/>
            <person name="Kim H.S."/>
            <person name="Klimowski L."/>
            <person name="Jin Y."/>
            <person name="Johnson S."/>
            <person name="Lee J."/>
            <person name="Lewis L."/>
            <person name="Liao D."/>
            <person name="Mark M.R."/>
            <person name="Robbie E."/>
            <person name="Sanchez C."/>
            <person name="Schoenfeld J."/>
            <person name="Seshagiri S."/>
            <person name="Simmons L."/>
            <person name="Singh J."/>
            <person name="Smith V."/>
            <person name="Stinson J."/>
            <person name="Vagts A."/>
            <person name="Vandlen R.L."/>
            <person name="Watanabe C."/>
            <person name="Wieand D."/>
            <person name="Woods K."/>
            <person name="Xie M.-H."/>
            <person name="Yansura D.G."/>
            <person name="Yi S."/>
            <person name="Yu G."/>
            <person name="Yuan J."/>
            <person name="Zhang M."/>
            <person name="Zhang Z."/>
            <person name="Goddard A.D."/>
            <person name="Wood W.I."/>
            <person name="Godowski P.J."/>
            <person name="Gray A.M."/>
        </authorList>
    </citation>
    <scope>NUCLEOTIDE SEQUENCE [LARGE SCALE MRNA] (ISOFORM 1)</scope>
</reference>
<reference key="4">
    <citation type="journal article" date="2006" name="Nature">
        <title>DNA sequence and analysis of human chromosome 8.</title>
        <authorList>
            <person name="Nusbaum C."/>
            <person name="Mikkelsen T.S."/>
            <person name="Zody M.C."/>
            <person name="Asakawa S."/>
            <person name="Taudien S."/>
            <person name="Garber M."/>
            <person name="Kodira C.D."/>
            <person name="Schueler M.G."/>
            <person name="Shimizu A."/>
            <person name="Whittaker C.A."/>
            <person name="Chang J.L."/>
            <person name="Cuomo C.A."/>
            <person name="Dewar K."/>
            <person name="FitzGerald M.G."/>
            <person name="Yang X."/>
            <person name="Allen N.R."/>
            <person name="Anderson S."/>
            <person name="Asakawa T."/>
            <person name="Blechschmidt K."/>
            <person name="Bloom T."/>
            <person name="Borowsky M.L."/>
            <person name="Butler J."/>
            <person name="Cook A."/>
            <person name="Corum B."/>
            <person name="DeArellano K."/>
            <person name="DeCaprio D."/>
            <person name="Dooley K.T."/>
            <person name="Dorris L. III"/>
            <person name="Engels R."/>
            <person name="Gloeckner G."/>
            <person name="Hafez N."/>
            <person name="Hagopian D.S."/>
            <person name="Hall J.L."/>
            <person name="Ishikawa S.K."/>
            <person name="Jaffe D.B."/>
            <person name="Kamat A."/>
            <person name="Kudoh J."/>
            <person name="Lehmann R."/>
            <person name="Lokitsang T."/>
            <person name="Macdonald P."/>
            <person name="Major J.E."/>
            <person name="Matthews C.D."/>
            <person name="Mauceli E."/>
            <person name="Menzel U."/>
            <person name="Mihalev A.H."/>
            <person name="Minoshima S."/>
            <person name="Murayama Y."/>
            <person name="Naylor J.W."/>
            <person name="Nicol R."/>
            <person name="Nguyen C."/>
            <person name="O'Leary S.B."/>
            <person name="O'Neill K."/>
            <person name="Parker S.C.J."/>
            <person name="Polley A."/>
            <person name="Raymond C.K."/>
            <person name="Reichwald K."/>
            <person name="Rodriguez J."/>
            <person name="Sasaki T."/>
            <person name="Schilhabel M."/>
            <person name="Siddiqui R."/>
            <person name="Smith C.L."/>
            <person name="Sneddon T.P."/>
            <person name="Talamas J.A."/>
            <person name="Tenzin P."/>
            <person name="Topham K."/>
            <person name="Venkataraman V."/>
            <person name="Wen G."/>
            <person name="Yamazaki S."/>
            <person name="Young S.K."/>
            <person name="Zeng Q."/>
            <person name="Zimmer A.R."/>
            <person name="Rosenthal A."/>
            <person name="Birren B.W."/>
            <person name="Platzer M."/>
            <person name="Shimizu N."/>
            <person name="Lander E.S."/>
        </authorList>
    </citation>
    <scope>NUCLEOTIDE SEQUENCE [LARGE SCALE GENOMIC DNA]</scope>
</reference>
<reference key="5">
    <citation type="submission" date="2005-07" db="EMBL/GenBank/DDBJ databases">
        <authorList>
            <person name="Mural R.J."/>
            <person name="Istrail S."/>
            <person name="Sutton G.G."/>
            <person name="Florea L."/>
            <person name="Halpern A.L."/>
            <person name="Mobarry C.M."/>
            <person name="Lippert R."/>
            <person name="Walenz B."/>
            <person name="Shatkay H."/>
            <person name="Dew I."/>
            <person name="Miller J.R."/>
            <person name="Flanigan M.J."/>
            <person name="Edwards N.J."/>
            <person name="Bolanos R."/>
            <person name="Fasulo D."/>
            <person name="Halldorsson B.V."/>
            <person name="Hannenhalli S."/>
            <person name="Turner R."/>
            <person name="Yooseph S."/>
            <person name="Lu F."/>
            <person name="Nusskern D.R."/>
            <person name="Shue B.C."/>
            <person name="Zheng X.H."/>
            <person name="Zhong F."/>
            <person name="Delcher A.L."/>
            <person name="Huson D.H."/>
            <person name="Kravitz S.A."/>
            <person name="Mouchard L."/>
            <person name="Reinert K."/>
            <person name="Remington K.A."/>
            <person name="Clark A.G."/>
            <person name="Waterman M.S."/>
            <person name="Eichler E.E."/>
            <person name="Adams M.D."/>
            <person name="Hunkapiller M.W."/>
            <person name="Myers E.W."/>
            <person name="Venter J.C."/>
        </authorList>
    </citation>
    <scope>NUCLEOTIDE SEQUENCE [LARGE SCALE GENOMIC DNA]</scope>
</reference>
<reference key="6">
    <citation type="journal article" date="2004" name="Genome Res.">
        <title>The status, quality, and expansion of the NIH full-length cDNA project: the Mammalian Gene Collection (MGC).</title>
        <authorList>
            <consortium name="The MGC Project Team"/>
        </authorList>
    </citation>
    <scope>NUCLEOTIDE SEQUENCE [LARGE SCALE MRNA] (ISOFORM 1)</scope>
    <source>
        <tissue>Kidney</tissue>
    </source>
</reference>
<reference key="7">
    <citation type="journal article" date="2004" name="Protein Sci.">
        <title>Signal peptide prediction based on analysis of experimentally verified cleavage sites.</title>
        <authorList>
            <person name="Zhang Z."/>
            <person name="Henzel W.J."/>
        </authorList>
    </citation>
    <scope>PROTEIN SEQUENCE OF 31-45 (ISOFORM 1)</scope>
</reference>
<reference key="8">
    <citation type="journal article" date="2011" name="JAMA">
        <title>Germline mutations in MSR1, ASCC1, and CTHRC1 in patients with Barrett esophagus and esophageal adenocarcinoma.</title>
        <authorList>
            <person name="Orloff M."/>
            <person name="Peterson C."/>
            <person name="He X."/>
            <person name="Ganapathi S."/>
            <person name="Heald B."/>
            <person name="Yang Y.R."/>
            <person name="Bebek G."/>
            <person name="Romigh T."/>
            <person name="Song J.H."/>
            <person name="Wu W."/>
            <person name="David S."/>
            <person name="Cheng Y."/>
            <person name="Meltzer S.J."/>
            <person name="Eng C."/>
        </authorList>
    </citation>
    <scope>INVOLVEMENT IN BE</scope>
    <scope>VARIANT PRO-44</scope>
</reference>
<dbReference type="EMBL" id="AY136825">
    <property type="protein sequence ID" value="AAN15749.1"/>
    <property type="molecule type" value="mRNA"/>
</dbReference>
<dbReference type="EMBL" id="AF395488">
    <property type="protein sequence ID" value="AAO17919.1"/>
    <property type="molecule type" value="mRNA"/>
</dbReference>
<dbReference type="EMBL" id="AY358914">
    <property type="protein sequence ID" value="AAQ89273.1"/>
    <property type="molecule type" value="mRNA"/>
</dbReference>
<dbReference type="EMBL" id="AC012213">
    <property type="status" value="NOT_ANNOTATED_CDS"/>
    <property type="molecule type" value="Genomic_DNA"/>
</dbReference>
<dbReference type="EMBL" id="AC069351">
    <property type="status" value="NOT_ANNOTATED_CDS"/>
    <property type="molecule type" value="Genomic_DNA"/>
</dbReference>
<dbReference type="EMBL" id="CH471060">
    <property type="protein sequence ID" value="EAW91876.1"/>
    <property type="molecule type" value="Genomic_DNA"/>
</dbReference>
<dbReference type="EMBL" id="BC014245">
    <property type="protein sequence ID" value="AAH14245.1"/>
    <property type="molecule type" value="mRNA"/>
</dbReference>
<dbReference type="CCDS" id="CCDS59110.1">
    <molecule id="Q96CG8-3"/>
</dbReference>
<dbReference type="CCDS" id="CCDS6299.1">
    <molecule id="Q96CG8-1"/>
</dbReference>
<dbReference type="RefSeq" id="NP_001243028.1">
    <molecule id="Q96CG8-3"/>
    <property type="nucleotide sequence ID" value="NM_001256099.2"/>
</dbReference>
<dbReference type="RefSeq" id="NP_612464.1">
    <molecule id="Q96CG8-1"/>
    <property type="nucleotide sequence ID" value="NM_138455.4"/>
</dbReference>
<dbReference type="BioGRID" id="125461">
    <property type="interactions" value="32"/>
</dbReference>
<dbReference type="FunCoup" id="Q96CG8">
    <property type="interactions" value="247"/>
</dbReference>
<dbReference type="IntAct" id="Q96CG8">
    <property type="interactions" value="14"/>
</dbReference>
<dbReference type="STRING" id="9606.ENSP00000330523"/>
<dbReference type="GlyCosmos" id="Q96CG8">
    <property type="glycosylation" value="1 site, No reported glycans"/>
</dbReference>
<dbReference type="GlyGen" id="Q96CG8">
    <property type="glycosylation" value="3 sites, 1 O-linked glycan (1 site)"/>
</dbReference>
<dbReference type="iPTMnet" id="Q96CG8"/>
<dbReference type="PhosphoSitePlus" id="Q96CG8"/>
<dbReference type="BioMuta" id="CTHRC1"/>
<dbReference type="DMDM" id="67462315"/>
<dbReference type="jPOST" id="Q96CG8"/>
<dbReference type="MassIVE" id="Q96CG8"/>
<dbReference type="PaxDb" id="9606-ENSP00000330523"/>
<dbReference type="PeptideAtlas" id="Q96CG8"/>
<dbReference type="ProteomicsDB" id="32251"/>
<dbReference type="ProteomicsDB" id="76186">
    <molecule id="Q96CG8-1"/>
</dbReference>
<dbReference type="ProteomicsDB" id="76187">
    <molecule id="Q96CG8-2"/>
</dbReference>
<dbReference type="Antibodypedia" id="26375">
    <property type="antibodies" value="323 antibodies from 35 providers"/>
</dbReference>
<dbReference type="DNASU" id="115908"/>
<dbReference type="Ensembl" id="ENST00000330295.10">
    <molecule id="Q96CG8-1"/>
    <property type="protein sequence ID" value="ENSP00000330523.5"/>
    <property type="gene ID" value="ENSG00000164932.13"/>
</dbReference>
<dbReference type="Ensembl" id="ENST00000520337.1">
    <molecule id="Q96CG8-3"/>
    <property type="protein sequence ID" value="ENSP00000430550.1"/>
    <property type="gene ID" value="ENSG00000164932.13"/>
</dbReference>
<dbReference type="GeneID" id="115908"/>
<dbReference type="KEGG" id="hsa:115908"/>
<dbReference type="MANE-Select" id="ENST00000330295.10">
    <property type="protein sequence ID" value="ENSP00000330523.5"/>
    <property type="RefSeq nucleotide sequence ID" value="NM_138455.4"/>
    <property type="RefSeq protein sequence ID" value="NP_612464.1"/>
</dbReference>
<dbReference type="UCSC" id="uc003ylk.5">
    <molecule id="Q96CG8-1"/>
    <property type="organism name" value="human"/>
</dbReference>
<dbReference type="AGR" id="HGNC:18831"/>
<dbReference type="CTD" id="115908"/>
<dbReference type="DisGeNET" id="115908"/>
<dbReference type="GeneCards" id="CTHRC1"/>
<dbReference type="HGNC" id="HGNC:18831">
    <property type="gene designation" value="CTHRC1"/>
</dbReference>
<dbReference type="HPA" id="ENSG00000164932">
    <property type="expression patterns" value="Tissue enhanced (adipose tissue, gallbladder, placenta, urinary bladder)"/>
</dbReference>
<dbReference type="MalaCards" id="CTHRC1"/>
<dbReference type="MIM" id="610635">
    <property type="type" value="gene"/>
</dbReference>
<dbReference type="MIM" id="614266">
    <property type="type" value="phenotype"/>
</dbReference>
<dbReference type="neXtProt" id="NX_Q96CG8"/>
<dbReference type="OpenTargets" id="ENSG00000164932"/>
<dbReference type="PharmGKB" id="PA38701"/>
<dbReference type="VEuPathDB" id="HostDB:ENSG00000164932"/>
<dbReference type="eggNOG" id="ENOG502QSJD">
    <property type="taxonomic scope" value="Eukaryota"/>
</dbReference>
<dbReference type="GeneTree" id="ENSGT00390000018094"/>
<dbReference type="HOGENOM" id="CLU_099891_0_0_1"/>
<dbReference type="InParanoid" id="Q96CG8"/>
<dbReference type="OMA" id="CADYPKG"/>
<dbReference type="OrthoDB" id="5985978at2759"/>
<dbReference type="PAN-GO" id="Q96CG8">
    <property type="GO annotations" value="0 GO annotations based on evolutionary models"/>
</dbReference>
<dbReference type="PhylomeDB" id="Q96CG8"/>
<dbReference type="TreeFam" id="TF328705"/>
<dbReference type="PathwayCommons" id="Q96CG8"/>
<dbReference type="SignaLink" id="Q96CG8"/>
<dbReference type="BioGRID-ORCS" id="115908">
    <property type="hits" value="11 hits in 1145 CRISPR screens"/>
</dbReference>
<dbReference type="GenomeRNAi" id="115908"/>
<dbReference type="Pharos" id="Q96CG8">
    <property type="development level" value="Tbio"/>
</dbReference>
<dbReference type="PRO" id="PR:Q96CG8"/>
<dbReference type="Proteomes" id="UP000005640">
    <property type="component" value="Chromosome 8"/>
</dbReference>
<dbReference type="RNAct" id="Q96CG8">
    <property type="molecule type" value="protein"/>
</dbReference>
<dbReference type="Bgee" id="ENSG00000164932">
    <property type="expression patterns" value="Expressed in tibia and 164 other cell types or tissues"/>
</dbReference>
<dbReference type="ExpressionAtlas" id="Q96CG8">
    <property type="expression patterns" value="baseline and differential"/>
</dbReference>
<dbReference type="GO" id="GO:0005581">
    <property type="term" value="C:collagen trimer"/>
    <property type="evidence" value="ECO:0007669"/>
    <property type="project" value="UniProtKB-KW"/>
</dbReference>
<dbReference type="GO" id="GO:0062023">
    <property type="term" value="C:collagen-containing extracellular matrix"/>
    <property type="evidence" value="ECO:0007005"/>
    <property type="project" value="BHF-UCL"/>
</dbReference>
<dbReference type="GO" id="GO:0005737">
    <property type="term" value="C:cytoplasm"/>
    <property type="evidence" value="ECO:0000318"/>
    <property type="project" value="GO_Central"/>
</dbReference>
<dbReference type="GO" id="GO:0005576">
    <property type="term" value="C:extracellular region"/>
    <property type="evidence" value="ECO:0007005"/>
    <property type="project" value="BHF-UCL"/>
</dbReference>
<dbReference type="GO" id="GO:0005615">
    <property type="term" value="C:extracellular space"/>
    <property type="evidence" value="ECO:0000314"/>
    <property type="project" value="UniProtKB"/>
</dbReference>
<dbReference type="GO" id="GO:0043005">
    <property type="term" value="C:neuron projection"/>
    <property type="evidence" value="ECO:0000318"/>
    <property type="project" value="GO_Central"/>
</dbReference>
<dbReference type="GO" id="GO:0016528">
    <property type="term" value="C:sarcoplasm"/>
    <property type="evidence" value="ECO:0007669"/>
    <property type="project" value="Ensembl"/>
</dbReference>
<dbReference type="GO" id="GO:0005109">
    <property type="term" value="F:frizzled binding"/>
    <property type="evidence" value="ECO:0007669"/>
    <property type="project" value="Ensembl"/>
</dbReference>
<dbReference type="GO" id="GO:0004666">
    <property type="term" value="F:prostaglandin-endoperoxide synthase activity"/>
    <property type="evidence" value="ECO:0000318"/>
    <property type="project" value="GO_Central"/>
</dbReference>
<dbReference type="GO" id="GO:0017147">
    <property type="term" value="F:Wnt-protein binding"/>
    <property type="evidence" value="ECO:0007669"/>
    <property type="project" value="Ensembl"/>
</dbReference>
<dbReference type="GO" id="GO:0090103">
    <property type="term" value="P:cochlea morphogenesis"/>
    <property type="evidence" value="ECO:0007669"/>
    <property type="project" value="Ensembl"/>
</dbReference>
<dbReference type="GO" id="GO:0019371">
    <property type="term" value="P:cyclooxygenase pathway"/>
    <property type="evidence" value="ECO:0000318"/>
    <property type="project" value="GO_Central"/>
</dbReference>
<dbReference type="GO" id="GO:0090177">
    <property type="term" value="P:establishment of planar polarity involved in neural tube closure"/>
    <property type="evidence" value="ECO:0007669"/>
    <property type="project" value="Ensembl"/>
</dbReference>
<dbReference type="GO" id="GO:0060122">
    <property type="term" value="P:inner ear receptor cell stereocilium organization"/>
    <property type="evidence" value="ECO:0007669"/>
    <property type="project" value="Ensembl"/>
</dbReference>
<dbReference type="GO" id="GO:0090090">
    <property type="term" value="P:negative regulation of canonical Wnt signaling pathway"/>
    <property type="evidence" value="ECO:0007669"/>
    <property type="project" value="Ensembl"/>
</dbReference>
<dbReference type="GO" id="GO:0043932">
    <property type="term" value="P:ossification involved in bone remodeling"/>
    <property type="evidence" value="ECO:0007669"/>
    <property type="project" value="Ensembl"/>
</dbReference>
<dbReference type="GO" id="GO:0001649">
    <property type="term" value="P:osteoblast differentiation"/>
    <property type="evidence" value="ECO:0007669"/>
    <property type="project" value="Ensembl"/>
</dbReference>
<dbReference type="GO" id="GO:0033687">
    <property type="term" value="P:osteoblast proliferation"/>
    <property type="evidence" value="ECO:0007669"/>
    <property type="project" value="Ensembl"/>
</dbReference>
<dbReference type="GO" id="GO:0045669">
    <property type="term" value="P:positive regulation of osteoblast differentiation"/>
    <property type="evidence" value="ECO:0007669"/>
    <property type="project" value="Ensembl"/>
</dbReference>
<dbReference type="GO" id="GO:0033690">
    <property type="term" value="P:positive regulation of osteoblast proliferation"/>
    <property type="evidence" value="ECO:0007669"/>
    <property type="project" value="Ensembl"/>
</dbReference>
<dbReference type="GO" id="GO:0060071">
    <property type="term" value="P:Wnt signaling pathway, planar cell polarity pathway"/>
    <property type="evidence" value="ECO:0007669"/>
    <property type="project" value="Ensembl"/>
</dbReference>